<gene>
    <name evidence="1" type="primary">hpt</name>
    <name type="ordered locus">Metin_1083</name>
</gene>
<sequence>MKLEESLKKCPVIKRGEYNYFVHPITDGIPLVEPSLLREVACRILKIVDFSEVDKIVTAEAMGIHLATTLSLYTDIPFVIIRKRSYGLEGEIPVFQKTGYSKGQLYVNGIKEGDKVVIVDDVISTGGTMIAIIEALKRAGAEIKDIVCVIERGKGREIVEKKTGYKIKTLVKIDVVDGKVVIK</sequence>
<reference key="1">
    <citation type="submission" date="2010-04" db="EMBL/GenBank/DDBJ databases">
        <title>Complete sequence of Methanocaldococcus infernus ME.</title>
        <authorList>
            <consortium name="US DOE Joint Genome Institute"/>
            <person name="Lucas S."/>
            <person name="Copeland A."/>
            <person name="Lapidus A."/>
            <person name="Cheng J.-F."/>
            <person name="Bruce D."/>
            <person name="Goodwin L."/>
            <person name="Pitluck S."/>
            <person name="Munk A.C."/>
            <person name="Detter J.C."/>
            <person name="Han C."/>
            <person name="Tapia R."/>
            <person name="Land M."/>
            <person name="Hauser L."/>
            <person name="Kyrpides N."/>
            <person name="Mikhailova N."/>
            <person name="Sieprawska-Lupa M."/>
            <person name="Whitman W.B."/>
            <person name="Woyke T."/>
        </authorList>
    </citation>
    <scope>NUCLEOTIDE SEQUENCE [LARGE SCALE GENOMIC DNA]</scope>
    <source>
        <strain>DSM 11812 / JCM 15783 / ME</strain>
    </source>
</reference>
<dbReference type="EC" id="2.4.2.8" evidence="1"/>
<dbReference type="EMBL" id="CP002009">
    <property type="protein sequence ID" value="ADG13741.1"/>
    <property type="molecule type" value="Genomic_DNA"/>
</dbReference>
<dbReference type="RefSeq" id="WP_013100486.1">
    <property type="nucleotide sequence ID" value="NC_014122.1"/>
</dbReference>
<dbReference type="SMR" id="D5VT38"/>
<dbReference type="STRING" id="573063.Metin_1083"/>
<dbReference type="GeneID" id="9132101"/>
<dbReference type="KEGG" id="mif:Metin_1083"/>
<dbReference type="eggNOG" id="arCOG00030">
    <property type="taxonomic scope" value="Archaea"/>
</dbReference>
<dbReference type="HOGENOM" id="CLU_126376_0_0_2"/>
<dbReference type="OrthoDB" id="8323at2157"/>
<dbReference type="UniPathway" id="UPA00591">
    <property type="reaction ID" value="UER00648"/>
</dbReference>
<dbReference type="Proteomes" id="UP000002061">
    <property type="component" value="Chromosome"/>
</dbReference>
<dbReference type="GO" id="GO:0005737">
    <property type="term" value="C:cytoplasm"/>
    <property type="evidence" value="ECO:0007669"/>
    <property type="project" value="UniProtKB-SubCell"/>
</dbReference>
<dbReference type="GO" id="GO:0052657">
    <property type="term" value="F:guanine phosphoribosyltransferase activity"/>
    <property type="evidence" value="ECO:0007669"/>
    <property type="project" value="RHEA"/>
</dbReference>
<dbReference type="GO" id="GO:0004422">
    <property type="term" value="F:hypoxanthine phosphoribosyltransferase activity"/>
    <property type="evidence" value="ECO:0007669"/>
    <property type="project" value="UniProtKB-UniRule"/>
</dbReference>
<dbReference type="GO" id="GO:0032264">
    <property type="term" value="P:IMP salvage"/>
    <property type="evidence" value="ECO:0007669"/>
    <property type="project" value="UniProtKB-UniRule"/>
</dbReference>
<dbReference type="GO" id="GO:0006166">
    <property type="term" value="P:purine ribonucleoside salvage"/>
    <property type="evidence" value="ECO:0007669"/>
    <property type="project" value="UniProtKB-KW"/>
</dbReference>
<dbReference type="CDD" id="cd06223">
    <property type="entry name" value="PRTases_typeI"/>
    <property type="match status" value="1"/>
</dbReference>
<dbReference type="Gene3D" id="3.40.50.2020">
    <property type="match status" value="1"/>
</dbReference>
<dbReference type="HAMAP" id="MF_01467">
    <property type="entry name" value="Hypx_phosphoribosyltr"/>
    <property type="match status" value="1"/>
</dbReference>
<dbReference type="InterPro" id="IPR026597">
    <property type="entry name" value="HGPRTase-like"/>
</dbReference>
<dbReference type="InterPro" id="IPR000836">
    <property type="entry name" value="PRibTrfase_dom"/>
</dbReference>
<dbReference type="InterPro" id="IPR029057">
    <property type="entry name" value="PRTase-like"/>
</dbReference>
<dbReference type="InterPro" id="IPR050118">
    <property type="entry name" value="Pur/Pyrimidine_PRTase"/>
</dbReference>
<dbReference type="NCBIfam" id="NF040646">
    <property type="entry name" value="HPT_Archaea"/>
    <property type="match status" value="1"/>
</dbReference>
<dbReference type="NCBIfam" id="NF002635">
    <property type="entry name" value="PRK02304.1-4"/>
    <property type="match status" value="1"/>
</dbReference>
<dbReference type="PANTHER" id="PTHR43864">
    <property type="entry name" value="HYPOXANTHINE/GUANINE PHOSPHORIBOSYLTRANSFERASE"/>
    <property type="match status" value="1"/>
</dbReference>
<dbReference type="PANTHER" id="PTHR43864:SF1">
    <property type="entry name" value="XANTHINE PHOSPHORIBOSYLTRANSFERASE"/>
    <property type="match status" value="1"/>
</dbReference>
<dbReference type="Pfam" id="PF00156">
    <property type="entry name" value="Pribosyltran"/>
    <property type="match status" value="1"/>
</dbReference>
<dbReference type="SUPFAM" id="SSF53271">
    <property type="entry name" value="PRTase-like"/>
    <property type="match status" value="1"/>
</dbReference>
<dbReference type="PROSITE" id="PS00103">
    <property type="entry name" value="PUR_PYR_PR_TRANSFER"/>
    <property type="match status" value="1"/>
</dbReference>
<evidence type="ECO:0000255" key="1">
    <source>
        <dbReference type="HAMAP-Rule" id="MF_01467"/>
    </source>
</evidence>
<accession>D5VT38</accession>
<proteinExistence type="inferred from homology"/>
<name>HPRT_METIM</name>
<comment type="function">
    <text evidence="1">Catalyzes a salvage reaction resulting in the formation of IMP that is energically less costly than de novo synthesis.</text>
</comment>
<comment type="catalytic activity">
    <reaction evidence="1">
        <text>IMP + diphosphate = hypoxanthine + 5-phospho-alpha-D-ribose 1-diphosphate</text>
        <dbReference type="Rhea" id="RHEA:17973"/>
        <dbReference type="ChEBI" id="CHEBI:17368"/>
        <dbReference type="ChEBI" id="CHEBI:33019"/>
        <dbReference type="ChEBI" id="CHEBI:58017"/>
        <dbReference type="ChEBI" id="CHEBI:58053"/>
        <dbReference type="EC" id="2.4.2.8"/>
    </reaction>
</comment>
<comment type="catalytic activity">
    <reaction evidence="1">
        <text>GMP + diphosphate = guanine + 5-phospho-alpha-D-ribose 1-diphosphate</text>
        <dbReference type="Rhea" id="RHEA:25424"/>
        <dbReference type="ChEBI" id="CHEBI:16235"/>
        <dbReference type="ChEBI" id="CHEBI:33019"/>
        <dbReference type="ChEBI" id="CHEBI:58017"/>
        <dbReference type="ChEBI" id="CHEBI:58115"/>
        <dbReference type="EC" id="2.4.2.8"/>
    </reaction>
</comment>
<comment type="pathway">
    <text evidence="1">Purine metabolism; IMP biosynthesis via salvage pathway; IMP from hypoxanthine: step 1/1.</text>
</comment>
<comment type="subunit">
    <text evidence="1">Homodimer.</text>
</comment>
<comment type="subcellular location">
    <subcellularLocation>
        <location evidence="1">Cytoplasm</location>
    </subcellularLocation>
</comment>
<comment type="similarity">
    <text evidence="1">Belongs to the purine/pyrimidine phosphoribosyltransferase family. Archaeal HPRT subfamily.</text>
</comment>
<protein>
    <recommendedName>
        <fullName evidence="1">Hypoxanthine/guanine phosphoribosyltransferase</fullName>
        <shortName evidence="1">HGPRTase</shortName>
        <ecNumber evidence="1">2.4.2.8</ecNumber>
    </recommendedName>
</protein>
<keyword id="KW-0963">Cytoplasm</keyword>
<keyword id="KW-0328">Glycosyltransferase</keyword>
<keyword id="KW-0660">Purine salvage</keyword>
<keyword id="KW-0808">Transferase</keyword>
<organism>
    <name type="scientific">Methanocaldococcus infernus (strain DSM 11812 / JCM 15783 / ME)</name>
    <dbReference type="NCBI Taxonomy" id="573063"/>
    <lineage>
        <taxon>Archaea</taxon>
        <taxon>Methanobacteriati</taxon>
        <taxon>Methanobacteriota</taxon>
        <taxon>Methanomada group</taxon>
        <taxon>Methanococci</taxon>
        <taxon>Methanococcales</taxon>
        <taxon>Methanocaldococcaceae</taxon>
        <taxon>Methanocaldococcus</taxon>
    </lineage>
</organism>
<feature type="chain" id="PRO_0000415467" description="Hypoxanthine/guanine phosphoribosyltransferase">
    <location>
        <begin position="1"/>
        <end position="183"/>
    </location>
</feature>